<gene>
    <name evidence="1" type="primary">minC</name>
    <name type="ordered locus">A1S_0881</name>
</gene>
<organism>
    <name type="scientific">Acinetobacter baumannii (strain ATCC 17978 / DSM 105126 / CIP 53.77 / LMG 1025 / NCDC KC755 / 5377)</name>
    <dbReference type="NCBI Taxonomy" id="400667"/>
    <lineage>
        <taxon>Bacteria</taxon>
        <taxon>Pseudomonadati</taxon>
        <taxon>Pseudomonadota</taxon>
        <taxon>Gammaproteobacteria</taxon>
        <taxon>Moraxellales</taxon>
        <taxon>Moraxellaceae</taxon>
        <taxon>Acinetobacter</taxon>
        <taxon>Acinetobacter calcoaceticus/baumannii complex</taxon>
    </lineage>
</organism>
<keyword id="KW-0131">Cell cycle</keyword>
<keyword id="KW-0132">Cell division</keyword>
<keyword id="KW-0717">Septation</keyword>
<reference key="1">
    <citation type="journal article" date="2007" name="Genes Dev.">
        <title>New insights into Acinetobacter baumannii pathogenesis revealed by high-density pyrosequencing and transposon mutagenesis.</title>
        <authorList>
            <person name="Smith M.G."/>
            <person name="Gianoulis T.A."/>
            <person name="Pukatzki S."/>
            <person name="Mekalanos J.J."/>
            <person name="Ornston L.N."/>
            <person name="Gerstein M."/>
            <person name="Snyder M."/>
        </authorList>
    </citation>
    <scope>NUCLEOTIDE SEQUENCE [LARGE SCALE GENOMIC DNA]</scope>
    <source>
        <strain>ATCC 17978 / DSM 105126 / CIP 53.77 / LMG 1025 / NCDC KC755 / 5377</strain>
    </source>
</reference>
<dbReference type="EMBL" id="CP000521">
    <property type="protein sequence ID" value="ABO11313.2"/>
    <property type="molecule type" value="Genomic_DNA"/>
</dbReference>
<dbReference type="RefSeq" id="WP_000763678.1">
    <property type="nucleotide sequence ID" value="NZ_CP053098.1"/>
</dbReference>
<dbReference type="SMR" id="A3M319"/>
<dbReference type="KEGG" id="acb:A1S_0881"/>
<dbReference type="HOGENOM" id="CLU_067812_0_1_6"/>
<dbReference type="GO" id="GO:0000902">
    <property type="term" value="P:cell morphogenesis"/>
    <property type="evidence" value="ECO:0007669"/>
    <property type="project" value="InterPro"/>
</dbReference>
<dbReference type="GO" id="GO:0000917">
    <property type="term" value="P:division septum assembly"/>
    <property type="evidence" value="ECO:0007669"/>
    <property type="project" value="UniProtKB-KW"/>
</dbReference>
<dbReference type="GO" id="GO:0051302">
    <property type="term" value="P:regulation of cell division"/>
    <property type="evidence" value="ECO:0007669"/>
    <property type="project" value="InterPro"/>
</dbReference>
<dbReference type="GO" id="GO:1901891">
    <property type="term" value="P:regulation of cell septum assembly"/>
    <property type="evidence" value="ECO:0007669"/>
    <property type="project" value="InterPro"/>
</dbReference>
<dbReference type="Gene3D" id="2.160.20.70">
    <property type="match status" value="1"/>
</dbReference>
<dbReference type="Gene3D" id="3.30.70.260">
    <property type="match status" value="1"/>
</dbReference>
<dbReference type="HAMAP" id="MF_00267">
    <property type="entry name" value="MinC"/>
    <property type="match status" value="1"/>
</dbReference>
<dbReference type="InterPro" id="IPR016098">
    <property type="entry name" value="CAP/MinC_C"/>
</dbReference>
<dbReference type="InterPro" id="IPR013033">
    <property type="entry name" value="MinC"/>
</dbReference>
<dbReference type="InterPro" id="IPR036145">
    <property type="entry name" value="MinC_C_sf"/>
</dbReference>
<dbReference type="InterPro" id="IPR007874">
    <property type="entry name" value="MinC_N"/>
</dbReference>
<dbReference type="InterPro" id="IPR005526">
    <property type="entry name" value="Septum_form_inhib_MinC_C"/>
</dbReference>
<dbReference type="NCBIfam" id="TIGR01222">
    <property type="entry name" value="minC"/>
    <property type="match status" value="1"/>
</dbReference>
<dbReference type="PANTHER" id="PTHR34108">
    <property type="entry name" value="SEPTUM SITE-DETERMINING PROTEIN MINC"/>
    <property type="match status" value="1"/>
</dbReference>
<dbReference type="PANTHER" id="PTHR34108:SF1">
    <property type="entry name" value="SEPTUM SITE-DETERMINING PROTEIN MINC"/>
    <property type="match status" value="1"/>
</dbReference>
<dbReference type="Pfam" id="PF03775">
    <property type="entry name" value="MinC_C"/>
    <property type="match status" value="1"/>
</dbReference>
<dbReference type="Pfam" id="PF05209">
    <property type="entry name" value="MinC_N"/>
    <property type="match status" value="1"/>
</dbReference>
<dbReference type="SUPFAM" id="SSF63848">
    <property type="entry name" value="Cell-division inhibitor MinC, C-terminal domain"/>
    <property type="match status" value="1"/>
</dbReference>
<feature type="chain" id="PRO_1000114263" description="Probable septum site-determining protein MinC">
    <location>
        <begin position="1"/>
        <end position="240"/>
    </location>
</feature>
<protein>
    <recommendedName>
        <fullName evidence="1">Probable septum site-determining protein MinC</fullName>
    </recommendedName>
</protein>
<accession>A3M319</accession>
<proteinExistence type="inferred from homology"/>
<comment type="function">
    <text evidence="1">Cell division inhibitor that blocks the formation of polar Z ring septums. Rapidly oscillates between the poles of the cell to destabilize FtsZ filaments that have formed before they mature into polar Z rings. Prevents FtsZ polymerization.</text>
</comment>
<comment type="subunit">
    <text evidence="1">Interacts with MinD and FtsZ.</text>
</comment>
<comment type="similarity">
    <text evidence="1">Belongs to the MinC family.</text>
</comment>
<evidence type="ECO:0000255" key="1">
    <source>
        <dbReference type="HAMAP-Rule" id="MF_00267"/>
    </source>
</evidence>
<sequence>MADIRITGRMVNFSRITFDTNDHDVIRQQLSNILNEGSYQGTVVIIDSTVEQELIALIQLLVSMGLQPMAVIDGILGDEARAIQFPVLPADQPLQRIKPTAEQVAIVEKPTSAQASVETKKPLNNNAVAHITSYHDEILRTGQSLVQDQGDIILKAGMNSGSEVIASGNIHIYGTVRGRVIAGAGGHAAARIFCQSLEAELVSIAGTYCVADDIPKHVVKKPVHIYLNEKQELEFEALEL</sequence>
<name>MINC_ACIBT</name>